<keyword id="KW-1015">Disulfide bond</keyword>
<keyword id="KW-0574">Periplasm</keyword>
<keyword id="KW-0732">Signal</keyword>
<keyword id="KW-0813">Transport</keyword>
<protein>
    <recommendedName>
        <fullName evidence="1">Vitamin B12-binding protein</fullName>
    </recommendedName>
</protein>
<comment type="function">
    <text evidence="1">Part of the ABC transporter complex BtuCDF involved in vitamin B12 import. Binds vitamin B12 and delivers it to the periplasmic surface of BtuC.</text>
</comment>
<comment type="subunit">
    <text evidence="1">The complex is composed of two ATP-binding proteins (BtuD), two transmembrane proteins (BtuC) and a solute-binding protein (BtuF).</text>
</comment>
<comment type="subcellular location">
    <subcellularLocation>
        <location evidence="1">Periplasm</location>
    </subcellularLocation>
</comment>
<comment type="similarity">
    <text evidence="1">Belongs to the BtuF family.</text>
</comment>
<reference key="1">
    <citation type="journal article" date="2008" name="PLoS ONE">
        <title>A recalibrated molecular clock and independent origins for the cholera pandemic clones.</title>
        <authorList>
            <person name="Feng L."/>
            <person name="Reeves P.R."/>
            <person name="Lan R."/>
            <person name="Ren Y."/>
            <person name="Gao C."/>
            <person name="Zhou Z."/>
            <person name="Ren Y."/>
            <person name="Cheng J."/>
            <person name="Wang W."/>
            <person name="Wang J."/>
            <person name="Qian W."/>
            <person name="Li D."/>
            <person name="Wang L."/>
        </authorList>
    </citation>
    <scope>NUCLEOTIDE SEQUENCE [LARGE SCALE GENOMIC DNA]</scope>
    <source>
        <strain>M66-2</strain>
    </source>
</reference>
<organism>
    <name type="scientific">Vibrio cholerae serotype O1 (strain M66-2)</name>
    <dbReference type="NCBI Taxonomy" id="579112"/>
    <lineage>
        <taxon>Bacteria</taxon>
        <taxon>Pseudomonadati</taxon>
        <taxon>Pseudomonadota</taxon>
        <taxon>Gammaproteobacteria</taxon>
        <taxon>Vibrionales</taxon>
        <taxon>Vibrionaceae</taxon>
        <taxon>Vibrio</taxon>
    </lineage>
</organism>
<feature type="signal peptide" evidence="1">
    <location>
        <begin position="1"/>
        <end position="20"/>
    </location>
</feature>
<feature type="chain" id="PRO_1000148778" description="Vitamin B12-binding protein">
    <location>
        <begin position="21"/>
        <end position="276"/>
    </location>
</feature>
<feature type="domain" description="Fe/B12 periplasmic-binding" evidence="1">
    <location>
        <begin position="27"/>
        <end position="274"/>
    </location>
</feature>
<feature type="binding site" evidence="1">
    <location>
        <position position="54"/>
    </location>
    <ligand>
        <name>cyanocob(III)alamin</name>
        <dbReference type="ChEBI" id="CHEBI:17439"/>
    </ligand>
</feature>
<feature type="site" description="Important for BtuC binding" evidence="1">
    <location>
        <position position="76"/>
    </location>
</feature>
<feature type="site" description="Important for BtuC binding" evidence="1">
    <location>
        <position position="206"/>
    </location>
</feature>
<feature type="disulfide bond" evidence="1">
    <location>
        <begin position="187"/>
        <end position="267"/>
    </location>
</feature>
<gene>
    <name evidence="1" type="primary">btuF</name>
    <name type="ordered locus">VCM66_2304</name>
</gene>
<proteinExistence type="inferred from homology"/>
<accession>C3LQF3</accession>
<name>BTUF_VIBCM</name>
<dbReference type="EMBL" id="CP001233">
    <property type="protein sequence ID" value="ACP06605.1"/>
    <property type="molecule type" value="Genomic_DNA"/>
</dbReference>
<dbReference type="RefSeq" id="WP_000960255.1">
    <property type="nucleotide sequence ID" value="NC_012578.1"/>
</dbReference>
<dbReference type="SMR" id="C3LQF3"/>
<dbReference type="KEGG" id="vcm:VCM66_2304"/>
<dbReference type="HOGENOM" id="CLU_038034_2_5_6"/>
<dbReference type="Proteomes" id="UP000001217">
    <property type="component" value="Chromosome I"/>
</dbReference>
<dbReference type="GO" id="GO:0042597">
    <property type="term" value="C:periplasmic space"/>
    <property type="evidence" value="ECO:0007669"/>
    <property type="project" value="UniProtKB-SubCell"/>
</dbReference>
<dbReference type="GO" id="GO:0031419">
    <property type="term" value="F:cobalamin binding"/>
    <property type="evidence" value="ECO:0007669"/>
    <property type="project" value="InterPro"/>
</dbReference>
<dbReference type="GO" id="GO:0015889">
    <property type="term" value="P:cobalamin transport"/>
    <property type="evidence" value="ECO:0007669"/>
    <property type="project" value="UniProtKB-UniRule"/>
</dbReference>
<dbReference type="CDD" id="cd01144">
    <property type="entry name" value="BtuF"/>
    <property type="match status" value="1"/>
</dbReference>
<dbReference type="Gene3D" id="3.40.50.1980">
    <property type="entry name" value="Nitrogenase molybdenum iron protein domain"/>
    <property type="match status" value="2"/>
</dbReference>
<dbReference type="HAMAP" id="MF_01000">
    <property type="entry name" value="BtuF"/>
    <property type="match status" value="1"/>
</dbReference>
<dbReference type="InterPro" id="IPR002491">
    <property type="entry name" value="ABC_transptr_periplasmic_BD"/>
</dbReference>
<dbReference type="InterPro" id="IPR023544">
    <property type="entry name" value="ABC_transptr_vit_B12-bd"/>
</dbReference>
<dbReference type="InterPro" id="IPR054828">
    <property type="entry name" value="Vit_B12_bind_prot"/>
</dbReference>
<dbReference type="InterPro" id="IPR051030">
    <property type="entry name" value="Vitamin_B12-ABC_binding"/>
</dbReference>
<dbReference type="NCBIfam" id="NF002894">
    <property type="entry name" value="PRK03379.1"/>
    <property type="match status" value="1"/>
</dbReference>
<dbReference type="NCBIfam" id="NF038402">
    <property type="entry name" value="TroA_like"/>
    <property type="match status" value="1"/>
</dbReference>
<dbReference type="PANTHER" id="PTHR42860">
    <property type="entry name" value="VITAMIN B12-BINDING PROTEIN"/>
    <property type="match status" value="1"/>
</dbReference>
<dbReference type="PANTHER" id="PTHR42860:SF1">
    <property type="entry name" value="VITAMIN B12-BINDING PROTEIN"/>
    <property type="match status" value="1"/>
</dbReference>
<dbReference type="Pfam" id="PF01497">
    <property type="entry name" value="Peripla_BP_2"/>
    <property type="match status" value="1"/>
</dbReference>
<dbReference type="SUPFAM" id="SSF53807">
    <property type="entry name" value="Helical backbone' metal receptor"/>
    <property type="match status" value="1"/>
</dbReference>
<dbReference type="PROSITE" id="PS50983">
    <property type="entry name" value="FE_B12_PBP"/>
    <property type="match status" value="1"/>
</dbReference>
<evidence type="ECO:0000255" key="1">
    <source>
        <dbReference type="HAMAP-Rule" id="MF_01000"/>
    </source>
</evidence>
<sequence length="276" mass="31071">MLVIRLIACTFLFITPSLLAKPFPAERIISLAPHATEIAYAAGLGDKLVAVSEYSDYPPQALELERVANHQTINIEKILTLKPDLIIAWPAGNPPRELAKLRQLGFTIYDSQTKTLDEIADNIEALSHYSANPEVGQKAAHDFRQRLQDLRTQYASNQPIRYFYQLSEKPIITLAQGHWPSEVFSLCGGVNIFADSEVPYPQVSIEQVLVKQPQVIFTSEHAIANGHMWRAWQAELSAVQNDQVWALNADWLNRPTPRTLDAVEQVCTYLKIAQKQ</sequence>